<gene>
    <name evidence="1" type="primary">murB</name>
    <name type="ordered locus">SynWH7803_0027</name>
</gene>
<sequence length="310" mass="32752">MSTGTGSLTALQDCGVLQQKVPLAEFTTWRVGGPAQWLAEPTSTEQIPELLQWARERRLPVHMIGAGSNLLIADGGLPGLTLCLRRLQGSALNADTGRVRAAAGEPLPTLARRAAKAGLQGLEWAVGIPGTVGGAAVMNAGAQGGCTAEQLISVDVIRFSDAQPSLATLSRDELAFSYRHSALQSNRHLVVAAEFQLEPGHDPAELQRLTSGNLNHRTSTQPYKLPSCGSVFRNPEPEKAGRLIESLGLKGRAIGGAQVSELHANFIVNTGDASANDIRALISLVQGEVMEAKGIALHPEVKRLGFETPD</sequence>
<protein>
    <recommendedName>
        <fullName evidence="1">UDP-N-acetylenolpyruvoylglucosamine reductase</fullName>
        <ecNumber evidence="1">1.3.1.98</ecNumber>
    </recommendedName>
    <alternativeName>
        <fullName evidence="1">UDP-N-acetylmuramate dehydrogenase</fullName>
    </alternativeName>
</protein>
<feature type="chain" id="PRO_0000332514" description="UDP-N-acetylenolpyruvoylglucosamine reductase">
    <location>
        <begin position="1"/>
        <end position="310"/>
    </location>
</feature>
<feature type="domain" description="FAD-binding PCMH-type" evidence="1">
    <location>
        <begin position="30"/>
        <end position="200"/>
    </location>
</feature>
<feature type="active site" evidence="1">
    <location>
        <position position="179"/>
    </location>
</feature>
<feature type="active site" description="Proton donor" evidence="1">
    <location>
        <position position="230"/>
    </location>
</feature>
<feature type="active site" evidence="1">
    <location>
        <position position="300"/>
    </location>
</feature>
<dbReference type="EC" id="1.3.1.98" evidence="1"/>
<dbReference type="EMBL" id="CT971583">
    <property type="protein sequence ID" value="CAK22453.1"/>
    <property type="molecule type" value="Genomic_DNA"/>
</dbReference>
<dbReference type="SMR" id="A5GHN8"/>
<dbReference type="STRING" id="32051.SynWH7803_0027"/>
<dbReference type="KEGG" id="syx:SynWH7803_0027"/>
<dbReference type="eggNOG" id="COG0812">
    <property type="taxonomic scope" value="Bacteria"/>
</dbReference>
<dbReference type="HOGENOM" id="CLU_035304_1_1_3"/>
<dbReference type="OrthoDB" id="9804753at2"/>
<dbReference type="UniPathway" id="UPA00219"/>
<dbReference type="Proteomes" id="UP000001566">
    <property type="component" value="Chromosome"/>
</dbReference>
<dbReference type="GO" id="GO:0005829">
    <property type="term" value="C:cytosol"/>
    <property type="evidence" value="ECO:0007669"/>
    <property type="project" value="TreeGrafter"/>
</dbReference>
<dbReference type="GO" id="GO:0071949">
    <property type="term" value="F:FAD binding"/>
    <property type="evidence" value="ECO:0007669"/>
    <property type="project" value="InterPro"/>
</dbReference>
<dbReference type="GO" id="GO:0008762">
    <property type="term" value="F:UDP-N-acetylmuramate dehydrogenase activity"/>
    <property type="evidence" value="ECO:0007669"/>
    <property type="project" value="UniProtKB-UniRule"/>
</dbReference>
<dbReference type="GO" id="GO:0051301">
    <property type="term" value="P:cell division"/>
    <property type="evidence" value="ECO:0007669"/>
    <property type="project" value="UniProtKB-KW"/>
</dbReference>
<dbReference type="GO" id="GO:0071555">
    <property type="term" value="P:cell wall organization"/>
    <property type="evidence" value="ECO:0007669"/>
    <property type="project" value="UniProtKB-KW"/>
</dbReference>
<dbReference type="GO" id="GO:0009252">
    <property type="term" value="P:peptidoglycan biosynthetic process"/>
    <property type="evidence" value="ECO:0007669"/>
    <property type="project" value="UniProtKB-UniRule"/>
</dbReference>
<dbReference type="GO" id="GO:0008360">
    <property type="term" value="P:regulation of cell shape"/>
    <property type="evidence" value="ECO:0007669"/>
    <property type="project" value="UniProtKB-KW"/>
</dbReference>
<dbReference type="Gene3D" id="3.30.465.10">
    <property type="match status" value="1"/>
</dbReference>
<dbReference type="Gene3D" id="3.90.78.10">
    <property type="entry name" value="UDP-N-acetylenolpyruvoylglucosamine reductase, C-terminal domain"/>
    <property type="match status" value="1"/>
</dbReference>
<dbReference type="Gene3D" id="3.30.43.10">
    <property type="entry name" value="Uridine Diphospho-n-acetylenolpyruvylglucosamine Reductase, domain 2"/>
    <property type="match status" value="1"/>
</dbReference>
<dbReference type="HAMAP" id="MF_00037">
    <property type="entry name" value="MurB"/>
    <property type="match status" value="1"/>
</dbReference>
<dbReference type="InterPro" id="IPR016166">
    <property type="entry name" value="FAD-bd_PCMH"/>
</dbReference>
<dbReference type="InterPro" id="IPR036318">
    <property type="entry name" value="FAD-bd_PCMH-like_sf"/>
</dbReference>
<dbReference type="InterPro" id="IPR016167">
    <property type="entry name" value="FAD-bd_PCMH_sub1"/>
</dbReference>
<dbReference type="InterPro" id="IPR016169">
    <property type="entry name" value="FAD-bd_PCMH_sub2"/>
</dbReference>
<dbReference type="InterPro" id="IPR003170">
    <property type="entry name" value="MurB"/>
</dbReference>
<dbReference type="InterPro" id="IPR011601">
    <property type="entry name" value="MurB_C"/>
</dbReference>
<dbReference type="InterPro" id="IPR036635">
    <property type="entry name" value="MurB_C_sf"/>
</dbReference>
<dbReference type="InterPro" id="IPR006094">
    <property type="entry name" value="Oxid_FAD_bind_N"/>
</dbReference>
<dbReference type="NCBIfam" id="TIGR00179">
    <property type="entry name" value="murB"/>
    <property type="match status" value="1"/>
</dbReference>
<dbReference type="NCBIfam" id="NF010480">
    <property type="entry name" value="PRK13905.1"/>
    <property type="match status" value="1"/>
</dbReference>
<dbReference type="PANTHER" id="PTHR21071">
    <property type="entry name" value="UDP-N-ACETYLENOLPYRUVOYLGLUCOSAMINE REDUCTASE"/>
    <property type="match status" value="1"/>
</dbReference>
<dbReference type="PANTHER" id="PTHR21071:SF4">
    <property type="entry name" value="UDP-N-ACETYLENOLPYRUVOYLGLUCOSAMINE REDUCTASE"/>
    <property type="match status" value="1"/>
</dbReference>
<dbReference type="Pfam" id="PF01565">
    <property type="entry name" value="FAD_binding_4"/>
    <property type="match status" value="1"/>
</dbReference>
<dbReference type="Pfam" id="PF02873">
    <property type="entry name" value="MurB_C"/>
    <property type="match status" value="1"/>
</dbReference>
<dbReference type="SUPFAM" id="SSF56176">
    <property type="entry name" value="FAD-binding/transporter-associated domain-like"/>
    <property type="match status" value="1"/>
</dbReference>
<dbReference type="SUPFAM" id="SSF56194">
    <property type="entry name" value="Uridine diphospho-N-Acetylenolpyruvylglucosamine reductase, MurB, C-terminal domain"/>
    <property type="match status" value="1"/>
</dbReference>
<dbReference type="PROSITE" id="PS51387">
    <property type="entry name" value="FAD_PCMH"/>
    <property type="match status" value="1"/>
</dbReference>
<accession>A5GHN8</accession>
<name>MURB_SYNPW</name>
<reference key="1">
    <citation type="submission" date="2006-05" db="EMBL/GenBank/DDBJ databases">
        <authorList>
            <consortium name="Genoscope"/>
        </authorList>
    </citation>
    <scope>NUCLEOTIDE SEQUENCE [LARGE SCALE GENOMIC DNA]</scope>
    <source>
        <strain>WH7803</strain>
    </source>
</reference>
<proteinExistence type="inferred from homology"/>
<comment type="function">
    <text evidence="1">Cell wall formation.</text>
</comment>
<comment type="catalytic activity">
    <reaction evidence="1">
        <text>UDP-N-acetyl-alpha-D-muramate + NADP(+) = UDP-N-acetyl-3-O-(1-carboxyvinyl)-alpha-D-glucosamine + NADPH + H(+)</text>
        <dbReference type="Rhea" id="RHEA:12248"/>
        <dbReference type="ChEBI" id="CHEBI:15378"/>
        <dbReference type="ChEBI" id="CHEBI:57783"/>
        <dbReference type="ChEBI" id="CHEBI:58349"/>
        <dbReference type="ChEBI" id="CHEBI:68483"/>
        <dbReference type="ChEBI" id="CHEBI:70757"/>
        <dbReference type="EC" id="1.3.1.98"/>
    </reaction>
</comment>
<comment type="cofactor">
    <cofactor evidence="1">
        <name>FAD</name>
        <dbReference type="ChEBI" id="CHEBI:57692"/>
    </cofactor>
</comment>
<comment type="pathway">
    <text evidence="1">Cell wall biogenesis; peptidoglycan biosynthesis.</text>
</comment>
<comment type="subcellular location">
    <subcellularLocation>
        <location evidence="1">Cytoplasm</location>
    </subcellularLocation>
</comment>
<comment type="similarity">
    <text evidence="1">Belongs to the MurB family.</text>
</comment>
<evidence type="ECO:0000255" key="1">
    <source>
        <dbReference type="HAMAP-Rule" id="MF_00037"/>
    </source>
</evidence>
<organism>
    <name type="scientific">Synechococcus sp. (strain WH7803)</name>
    <dbReference type="NCBI Taxonomy" id="32051"/>
    <lineage>
        <taxon>Bacteria</taxon>
        <taxon>Bacillati</taxon>
        <taxon>Cyanobacteriota</taxon>
        <taxon>Cyanophyceae</taxon>
        <taxon>Synechococcales</taxon>
        <taxon>Synechococcaceae</taxon>
        <taxon>Synechococcus</taxon>
    </lineage>
</organism>
<keyword id="KW-0131">Cell cycle</keyword>
<keyword id="KW-0132">Cell division</keyword>
<keyword id="KW-0133">Cell shape</keyword>
<keyword id="KW-0961">Cell wall biogenesis/degradation</keyword>
<keyword id="KW-0963">Cytoplasm</keyword>
<keyword id="KW-0274">FAD</keyword>
<keyword id="KW-0285">Flavoprotein</keyword>
<keyword id="KW-0521">NADP</keyword>
<keyword id="KW-0560">Oxidoreductase</keyword>
<keyword id="KW-0573">Peptidoglycan synthesis</keyword>
<keyword id="KW-1185">Reference proteome</keyword>